<accession>P0DKN4</accession>
<dbReference type="SMR" id="P0DKN4"/>
<dbReference type="GO" id="GO:0005576">
    <property type="term" value="C:extracellular region"/>
    <property type="evidence" value="ECO:0007669"/>
    <property type="project" value="UniProtKB-SubCell"/>
</dbReference>
<dbReference type="GO" id="GO:0099106">
    <property type="term" value="F:ion channel regulator activity"/>
    <property type="evidence" value="ECO:0007669"/>
    <property type="project" value="UniProtKB-KW"/>
</dbReference>
<dbReference type="GO" id="GO:0090729">
    <property type="term" value="F:toxin activity"/>
    <property type="evidence" value="ECO:0007669"/>
    <property type="project" value="UniProtKB-KW"/>
</dbReference>
<feature type="chain" id="PRO_0000419850" description="Turripeptide OL47">
    <location>
        <begin position="1"/>
        <end position="49"/>
    </location>
</feature>
<feature type="region of interest" description="Disordered" evidence="2">
    <location>
        <begin position="28"/>
        <end position="49"/>
    </location>
</feature>
<feature type="compositionally biased region" description="Pro residues" evidence="2">
    <location>
        <begin position="40"/>
        <end position="49"/>
    </location>
</feature>
<comment type="function">
    <text evidence="1">Acts as a neurotoxin by inhibiting an ion channel.</text>
</comment>
<comment type="subcellular location">
    <subcellularLocation>
        <location evidence="1">Secreted</location>
    </subcellularLocation>
</comment>
<comment type="tissue specificity">
    <text>Expressed by the venom duct.</text>
</comment>
<comment type="domain">
    <text>The cysteine framework is XII (C-C-C-C-CC-C-C).</text>
</comment>
<comment type="PTM">
    <text evidence="1">Contains 4 disulfide bonds.</text>
</comment>
<evidence type="ECO:0000250" key="1"/>
<evidence type="ECO:0000256" key="2">
    <source>
        <dbReference type="SAM" id="MobiDB-lite"/>
    </source>
</evidence>
<reference key="1">
    <citation type="journal article" date="2006" name="J. Mol. Evol.">
        <title>Genes expressed in a turrid venom duct: divergence and similarity to conotoxins.</title>
        <authorList>
            <person name="Watkins M."/>
            <person name="Hillyard D.R."/>
            <person name="Olivera B.M."/>
        </authorList>
    </citation>
    <scope>NUCLEOTIDE SEQUENCE [MRNA]</scope>
    <source>
        <tissue>Venom duct</tissue>
    </source>
</reference>
<protein>
    <recommendedName>
        <fullName>Turripeptide OL47</fullName>
    </recommendedName>
</protein>
<organism>
    <name type="scientific">Iotyrris olangoensis</name>
    <name type="common">Sea snail</name>
    <name type="synonym">Lophiotoma olangoensis</name>
    <dbReference type="NCBI Taxonomy" id="2420066"/>
    <lineage>
        <taxon>Eukaryota</taxon>
        <taxon>Metazoa</taxon>
        <taxon>Spiralia</taxon>
        <taxon>Lophotrochozoa</taxon>
        <taxon>Mollusca</taxon>
        <taxon>Gastropoda</taxon>
        <taxon>Caenogastropoda</taxon>
        <taxon>Neogastropoda</taxon>
        <taxon>Conoidea</taxon>
        <taxon>Turridae</taxon>
        <taxon>Iotyrris</taxon>
    </lineage>
</organism>
<name>TU47_IOTOL</name>
<proteinExistence type="evidence at transcript level"/>
<sequence>TSCNAATGRSPGCFCNNDNNCRDTCCPRSDTEKKCTGGPDPCPPRQWPD</sequence>
<keyword id="KW-1015">Disulfide bond</keyword>
<keyword id="KW-0872">Ion channel impairing toxin</keyword>
<keyword id="KW-0528">Neurotoxin</keyword>
<keyword id="KW-0964">Secreted</keyword>
<keyword id="KW-0800">Toxin</keyword>